<proteinExistence type="inferred from homology"/>
<comment type="function">
    <text evidence="1">Catalyzes the formation of S-adenosylmethionine (AdoMet) from methionine and ATP. The overall synthetic reaction is composed of two sequential steps, AdoMet formation and the subsequent tripolyphosphate hydrolysis which occurs prior to release of AdoMet from the enzyme.</text>
</comment>
<comment type="catalytic activity">
    <reaction evidence="1">
        <text>L-methionine + ATP + H2O = S-adenosyl-L-methionine + phosphate + diphosphate</text>
        <dbReference type="Rhea" id="RHEA:21080"/>
        <dbReference type="ChEBI" id="CHEBI:15377"/>
        <dbReference type="ChEBI" id="CHEBI:30616"/>
        <dbReference type="ChEBI" id="CHEBI:33019"/>
        <dbReference type="ChEBI" id="CHEBI:43474"/>
        <dbReference type="ChEBI" id="CHEBI:57844"/>
        <dbReference type="ChEBI" id="CHEBI:59789"/>
        <dbReference type="EC" id="2.5.1.6"/>
    </reaction>
</comment>
<comment type="cofactor">
    <cofactor evidence="1">
        <name>Mg(2+)</name>
        <dbReference type="ChEBI" id="CHEBI:18420"/>
    </cofactor>
    <text evidence="1">Binds 2 divalent ions per subunit.</text>
</comment>
<comment type="cofactor">
    <cofactor evidence="1">
        <name>K(+)</name>
        <dbReference type="ChEBI" id="CHEBI:29103"/>
    </cofactor>
    <text evidence="1">Binds 1 potassium ion per subunit.</text>
</comment>
<comment type="pathway">
    <text evidence="1">Amino-acid biosynthesis; S-adenosyl-L-methionine biosynthesis; S-adenosyl-L-methionine from L-methionine: step 1/1.</text>
</comment>
<comment type="subunit">
    <text evidence="1">Homotetramer; dimer of dimers.</text>
</comment>
<comment type="subcellular location">
    <subcellularLocation>
        <location evidence="1">Cytoplasm</location>
    </subcellularLocation>
</comment>
<comment type="similarity">
    <text evidence="1">Belongs to the AdoMet synthase family.</text>
</comment>
<organism>
    <name type="scientific">Burkholderia vietnamiensis (strain G4 / LMG 22486)</name>
    <name type="common">Burkholderia cepacia (strain R1808)</name>
    <dbReference type="NCBI Taxonomy" id="269482"/>
    <lineage>
        <taxon>Bacteria</taxon>
        <taxon>Pseudomonadati</taxon>
        <taxon>Pseudomonadota</taxon>
        <taxon>Betaproteobacteria</taxon>
        <taxon>Burkholderiales</taxon>
        <taxon>Burkholderiaceae</taxon>
        <taxon>Burkholderia</taxon>
        <taxon>Burkholderia cepacia complex</taxon>
    </lineage>
</organism>
<feature type="chain" id="PRO_1000007931" description="S-adenosylmethionine synthase">
    <location>
        <begin position="1"/>
        <end position="395"/>
    </location>
</feature>
<feature type="region of interest" description="Flexible loop" evidence="1">
    <location>
        <begin position="100"/>
        <end position="110"/>
    </location>
</feature>
<feature type="binding site" description="in other chain" evidence="1">
    <location>
        <position position="16"/>
    </location>
    <ligand>
        <name>ATP</name>
        <dbReference type="ChEBI" id="CHEBI:30616"/>
        <note>ligand shared between two neighboring subunits</note>
    </ligand>
</feature>
<feature type="binding site" evidence="1">
    <location>
        <position position="18"/>
    </location>
    <ligand>
        <name>Mg(2+)</name>
        <dbReference type="ChEBI" id="CHEBI:18420"/>
    </ligand>
</feature>
<feature type="binding site" evidence="1">
    <location>
        <position position="44"/>
    </location>
    <ligand>
        <name>K(+)</name>
        <dbReference type="ChEBI" id="CHEBI:29103"/>
    </ligand>
</feature>
<feature type="binding site" description="in other chain" evidence="1">
    <location>
        <position position="57"/>
    </location>
    <ligand>
        <name>L-methionine</name>
        <dbReference type="ChEBI" id="CHEBI:57844"/>
        <note>ligand shared between two neighboring subunits</note>
    </ligand>
</feature>
<feature type="binding site" description="in other chain" evidence="1">
    <location>
        <position position="100"/>
    </location>
    <ligand>
        <name>L-methionine</name>
        <dbReference type="ChEBI" id="CHEBI:57844"/>
        <note>ligand shared between two neighboring subunits</note>
    </ligand>
</feature>
<feature type="binding site" description="in other chain" evidence="1">
    <location>
        <begin position="167"/>
        <end position="169"/>
    </location>
    <ligand>
        <name>ATP</name>
        <dbReference type="ChEBI" id="CHEBI:30616"/>
        <note>ligand shared between two neighboring subunits</note>
    </ligand>
</feature>
<feature type="binding site" description="in other chain" evidence="1">
    <location>
        <begin position="233"/>
        <end position="234"/>
    </location>
    <ligand>
        <name>ATP</name>
        <dbReference type="ChEBI" id="CHEBI:30616"/>
        <note>ligand shared between two neighboring subunits</note>
    </ligand>
</feature>
<feature type="binding site" evidence="1">
    <location>
        <position position="242"/>
    </location>
    <ligand>
        <name>ATP</name>
        <dbReference type="ChEBI" id="CHEBI:30616"/>
        <note>ligand shared between two neighboring subunits</note>
    </ligand>
</feature>
<feature type="binding site" evidence="1">
    <location>
        <position position="242"/>
    </location>
    <ligand>
        <name>L-methionine</name>
        <dbReference type="ChEBI" id="CHEBI:57844"/>
        <note>ligand shared between two neighboring subunits</note>
    </ligand>
</feature>
<feature type="binding site" description="in other chain" evidence="1">
    <location>
        <begin position="248"/>
        <end position="249"/>
    </location>
    <ligand>
        <name>ATP</name>
        <dbReference type="ChEBI" id="CHEBI:30616"/>
        <note>ligand shared between two neighboring subunits</note>
    </ligand>
</feature>
<feature type="binding site" evidence="1">
    <location>
        <position position="265"/>
    </location>
    <ligand>
        <name>ATP</name>
        <dbReference type="ChEBI" id="CHEBI:30616"/>
        <note>ligand shared between two neighboring subunits</note>
    </ligand>
</feature>
<feature type="binding site" evidence="1">
    <location>
        <position position="269"/>
    </location>
    <ligand>
        <name>ATP</name>
        <dbReference type="ChEBI" id="CHEBI:30616"/>
        <note>ligand shared between two neighboring subunits</note>
    </ligand>
</feature>
<feature type="binding site" description="in other chain" evidence="1">
    <location>
        <position position="273"/>
    </location>
    <ligand>
        <name>L-methionine</name>
        <dbReference type="ChEBI" id="CHEBI:57844"/>
        <note>ligand shared between two neighboring subunits</note>
    </ligand>
</feature>
<dbReference type="EC" id="2.5.1.6" evidence="1"/>
<dbReference type="EMBL" id="CP000614">
    <property type="protein sequence ID" value="ABO56157.1"/>
    <property type="molecule type" value="Genomic_DNA"/>
</dbReference>
<dbReference type="SMR" id="A4JIQ4"/>
<dbReference type="KEGG" id="bvi:Bcep1808_3166"/>
<dbReference type="eggNOG" id="COG0192">
    <property type="taxonomic scope" value="Bacteria"/>
</dbReference>
<dbReference type="HOGENOM" id="CLU_041802_1_1_4"/>
<dbReference type="UniPathway" id="UPA00315">
    <property type="reaction ID" value="UER00080"/>
</dbReference>
<dbReference type="Proteomes" id="UP000002287">
    <property type="component" value="Chromosome 1"/>
</dbReference>
<dbReference type="GO" id="GO:0005737">
    <property type="term" value="C:cytoplasm"/>
    <property type="evidence" value="ECO:0007669"/>
    <property type="project" value="UniProtKB-SubCell"/>
</dbReference>
<dbReference type="GO" id="GO:0005524">
    <property type="term" value="F:ATP binding"/>
    <property type="evidence" value="ECO:0007669"/>
    <property type="project" value="UniProtKB-UniRule"/>
</dbReference>
<dbReference type="GO" id="GO:0000287">
    <property type="term" value="F:magnesium ion binding"/>
    <property type="evidence" value="ECO:0007669"/>
    <property type="project" value="UniProtKB-UniRule"/>
</dbReference>
<dbReference type="GO" id="GO:0004478">
    <property type="term" value="F:methionine adenosyltransferase activity"/>
    <property type="evidence" value="ECO:0007669"/>
    <property type="project" value="UniProtKB-UniRule"/>
</dbReference>
<dbReference type="GO" id="GO:0006730">
    <property type="term" value="P:one-carbon metabolic process"/>
    <property type="evidence" value="ECO:0007669"/>
    <property type="project" value="UniProtKB-KW"/>
</dbReference>
<dbReference type="GO" id="GO:0006556">
    <property type="term" value="P:S-adenosylmethionine biosynthetic process"/>
    <property type="evidence" value="ECO:0007669"/>
    <property type="project" value="UniProtKB-UniRule"/>
</dbReference>
<dbReference type="CDD" id="cd18079">
    <property type="entry name" value="S-AdoMet_synt"/>
    <property type="match status" value="1"/>
</dbReference>
<dbReference type="FunFam" id="3.30.300.10:FF:000003">
    <property type="entry name" value="S-adenosylmethionine synthase"/>
    <property type="match status" value="1"/>
</dbReference>
<dbReference type="FunFam" id="3.30.300.10:FF:000004">
    <property type="entry name" value="S-adenosylmethionine synthase"/>
    <property type="match status" value="1"/>
</dbReference>
<dbReference type="Gene3D" id="3.30.300.10">
    <property type="match status" value="3"/>
</dbReference>
<dbReference type="HAMAP" id="MF_00086">
    <property type="entry name" value="S_AdoMet_synth1"/>
    <property type="match status" value="1"/>
</dbReference>
<dbReference type="InterPro" id="IPR022631">
    <property type="entry name" value="ADOMET_SYNTHASE_CS"/>
</dbReference>
<dbReference type="InterPro" id="IPR022630">
    <property type="entry name" value="S-AdoMet_synt_C"/>
</dbReference>
<dbReference type="InterPro" id="IPR022629">
    <property type="entry name" value="S-AdoMet_synt_central"/>
</dbReference>
<dbReference type="InterPro" id="IPR022628">
    <property type="entry name" value="S-AdoMet_synt_N"/>
</dbReference>
<dbReference type="InterPro" id="IPR002133">
    <property type="entry name" value="S-AdoMet_synthetase"/>
</dbReference>
<dbReference type="InterPro" id="IPR022636">
    <property type="entry name" value="S-AdoMet_synthetase_sfam"/>
</dbReference>
<dbReference type="NCBIfam" id="TIGR01034">
    <property type="entry name" value="metK"/>
    <property type="match status" value="1"/>
</dbReference>
<dbReference type="PANTHER" id="PTHR11964">
    <property type="entry name" value="S-ADENOSYLMETHIONINE SYNTHETASE"/>
    <property type="match status" value="1"/>
</dbReference>
<dbReference type="Pfam" id="PF02773">
    <property type="entry name" value="S-AdoMet_synt_C"/>
    <property type="match status" value="1"/>
</dbReference>
<dbReference type="Pfam" id="PF02772">
    <property type="entry name" value="S-AdoMet_synt_M"/>
    <property type="match status" value="1"/>
</dbReference>
<dbReference type="Pfam" id="PF00438">
    <property type="entry name" value="S-AdoMet_synt_N"/>
    <property type="match status" value="1"/>
</dbReference>
<dbReference type="PIRSF" id="PIRSF000497">
    <property type="entry name" value="MAT"/>
    <property type="match status" value="1"/>
</dbReference>
<dbReference type="SUPFAM" id="SSF55973">
    <property type="entry name" value="S-adenosylmethionine synthetase"/>
    <property type="match status" value="3"/>
</dbReference>
<dbReference type="PROSITE" id="PS00376">
    <property type="entry name" value="ADOMET_SYNTHASE_1"/>
    <property type="match status" value="1"/>
</dbReference>
<dbReference type="PROSITE" id="PS00377">
    <property type="entry name" value="ADOMET_SYNTHASE_2"/>
    <property type="match status" value="1"/>
</dbReference>
<keyword id="KW-0067">ATP-binding</keyword>
<keyword id="KW-0963">Cytoplasm</keyword>
<keyword id="KW-0460">Magnesium</keyword>
<keyword id="KW-0479">Metal-binding</keyword>
<keyword id="KW-0547">Nucleotide-binding</keyword>
<keyword id="KW-0554">One-carbon metabolism</keyword>
<keyword id="KW-0630">Potassium</keyword>
<keyword id="KW-0808">Transferase</keyword>
<evidence type="ECO:0000255" key="1">
    <source>
        <dbReference type="HAMAP-Rule" id="MF_00086"/>
    </source>
</evidence>
<name>METK_BURVG</name>
<reference key="1">
    <citation type="submission" date="2007-03" db="EMBL/GenBank/DDBJ databases">
        <title>Complete sequence of chromosome 1 of Burkholderia vietnamiensis G4.</title>
        <authorList>
            <consortium name="US DOE Joint Genome Institute"/>
            <person name="Copeland A."/>
            <person name="Lucas S."/>
            <person name="Lapidus A."/>
            <person name="Barry K."/>
            <person name="Detter J.C."/>
            <person name="Glavina del Rio T."/>
            <person name="Hammon N."/>
            <person name="Israni S."/>
            <person name="Dalin E."/>
            <person name="Tice H."/>
            <person name="Pitluck S."/>
            <person name="Chain P."/>
            <person name="Malfatti S."/>
            <person name="Shin M."/>
            <person name="Vergez L."/>
            <person name="Schmutz J."/>
            <person name="Larimer F."/>
            <person name="Land M."/>
            <person name="Hauser L."/>
            <person name="Kyrpides N."/>
            <person name="Tiedje J."/>
            <person name="Richardson P."/>
        </authorList>
    </citation>
    <scope>NUCLEOTIDE SEQUENCE [LARGE SCALE GENOMIC DNA]</scope>
    <source>
        <strain>G4 / LMG 22486</strain>
    </source>
</reference>
<protein>
    <recommendedName>
        <fullName evidence="1">S-adenosylmethionine synthase</fullName>
        <shortName evidence="1">AdoMet synthase</shortName>
        <ecNumber evidence="1">2.5.1.6</ecNumber>
    </recommendedName>
    <alternativeName>
        <fullName evidence="1">MAT</fullName>
    </alternativeName>
    <alternativeName>
        <fullName evidence="1">Methionine adenosyltransferase</fullName>
    </alternativeName>
</protein>
<accession>A4JIQ4</accession>
<sequence>MANDYFFTSESVSEGHPDKVADQISDAILDAILEQDKYSRVAAETLCNTGLVVLAGEITTTANIDYIQIARDTIKRIGYDNTDYGIDYKGCAVLVAYDKQSPDIAQGVDRAHDDNLDQGAGDQGLMFGYACDETPELMPLPIYLSHRLVERQASLRRDGRLPWLRPDAKSQVTIRYVDGKPDSIDTVVLSTQHAPDIELPALREAVIEEIIKPTLPADLIKGDIKFLVNPTGRFVIGGPQGDCGLTGRKIIVDTYGGAAPHGGGAFSGKDPSKVDRSAAYAGRYVAKNIVAAGLASRALIQVSYAIGVAEPTSVMVNTFGTGRVSDAVITKLVREHFDLRPKGIIKMLDLLRPIYEKTAAYGHFGREEPEFSWEATDKALALAEAAGVEPTARVA</sequence>
<gene>
    <name evidence="1" type="primary">metK</name>
    <name type="ordered locus">Bcep1808_3166</name>
</gene>